<evidence type="ECO:0000255" key="1">
    <source>
        <dbReference type="PROSITE-ProRule" id="PRU00303"/>
    </source>
</evidence>
<evidence type="ECO:0000256" key="2">
    <source>
        <dbReference type="SAM" id="MobiDB-lite"/>
    </source>
</evidence>
<evidence type="ECO:0000305" key="3"/>
<accession>P33385</accession>
<sequence>MKMLKKGTAVLFVMIMAVMLVACGDKEETKTYTLSQNGVDSKLTYTYKGDKVTKQTAENTMSYASLGVASKEDAEKMLKATSDKFQGIDGLKEKIEYKDDKAIETLEVDYTKISSEDMNKIPGMSSNGDTSKGISMEESAKMLESQGYKEVSK</sequence>
<organism>
    <name type="scientific">Listeria monocytogenes serovar 1/2a (strain ATCC BAA-679 / EGD-e)</name>
    <dbReference type="NCBI Taxonomy" id="169963"/>
    <lineage>
        <taxon>Bacteria</taxon>
        <taxon>Bacillati</taxon>
        <taxon>Bacillota</taxon>
        <taxon>Bacilli</taxon>
        <taxon>Bacillales</taxon>
        <taxon>Listeriaceae</taxon>
        <taxon>Listeria</taxon>
    </lineage>
</organism>
<name>Y207_LISMO</name>
<dbReference type="EMBL" id="M82881">
    <property type="protein sequence ID" value="AAA25271.1"/>
    <property type="molecule type" value="Genomic_DNA"/>
</dbReference>
<dbReference type="EMBL" id="AL591974">
    <property type="protein sequence ID" value="CAD00734.1"/>
    <property type="molecule type" value="Genomic_DNA"/>
</dbReference>
<dbReference type="PIR" id="AH1100">
    <property type="entry name" value="AH1100"/>
</dbReference>
<dbReference type="PIR" id="F43868">
    <property type="entry name" value="F43868"/>
</dbReference>
<dbReference type="RefSeq" id="NP_463738.1">
    <property type="nucleotide sequence ID" value="NC_003210.1"/>
</dbReference>
<dbReference type="RefSeq" id="WP_003722736.1">
    <property type="nucleotide sequence ID" value="NZ_CP149495.1"/>
</dbReference>
<dbReference type="SMR" id="P33385"/>
<dbReference type="STRING" id="169963.gene:17592843"/>
<dbReference type="PaxDb" id="169963-lmo0207"/>
<dbReference type="EnsemblBacteria" id="CAD00734">
    <property type="protein sequence ID" value="CAD00734"/>
    <property type="gene ID" value="CAD00734"/>
</dbReference>
<dbReference type="GeneID" id="987038"/>
<dbReference type="KEGG" id="lmo:lmo0207"/>
<dbReference type="PATRIC" id="fig|169963.11.peg.212"/>
<dbReference type="eggNOG" id="COG4808">
    <property type="taxonomic scope" value="Bacteria"/>
</dbReference>
<dbReference type="HOGENOM" id="CLU_126600_1_0_9"/>
<dbReference type="OrthoDB" id="6586670at2"/>
<dbReference type="PhylomeDB" id="P33385"/>
<dbReference type="BioCyc" id="LMON169963:LMO0207-MONOMER"/>
<dbReference type="Proteomes" id="UP000000817">
    <property type="component" value="Chromosome"/>
</dbReference>
<dbReference type="GO" id="GO:0005886">
    <property type="term" value="C:plasma membrane"/>
    <property type="evidence" value="ECO:0007669"/>
    <property type="project" value="UniProtKB-SubCell"/>
</dbReference>
<dbReference type="Gene3D" id="3.30.1830.10">
    <property type="entry name" value="YehR-like"/>
    <property type="match status" value="1"/>
</dbReference>
<dbReference type="InterPro" id="IPR009736">
    <property type="entry name" value="DUF1307"/>
</dbReference>
<dbReference type="InterPro" id="IPR036699">
    <property type="entry name" value="YehR-like_sf"/>
</dbReference>
<dbReference type="Pfam" id="PF06998">
    <property type="entry name" value="DUF1307"/>
    <property type="match status" value="1"/>
</dbReference>
<dbReference type="PIRSF" id="PIRSF006187">
    <property type="entry name" value="DUF1307"/>
    <property type="match status" value="1"/>
</dbReference>
<dbReference type="SUPFAM" id="SSF160704">
    <property type="entry name" value="YehR-like"/>
    <property type="match status" value="1"/>
</dbReference>
<dbReference type="PROSITE" id="PS51257">
    <property type="entry name" value="PROKAR_LIPOPROTEIN"/>
    <property type="match status" value="1"/>
</dbReference>
<proteinExistence type="inferred from homology"/>
<comment type="subcellular location">
    <subcellularLocation>
        <location evidence="1">Cell membrane</location>
        <topology evidence="1">Lipid-anchor</topology>
    </subcellularLocation>
</comment>
<comment type="similarity">
    <text evidence="3">To E.coli YehR.</text>
</comment>
<feature type="signal peptide" evidence="1">
    <location>
        <begin position="1"/>
        <end position="22"/>
    </location>
</feature>
<feature type="chain" id="PRO_0000018043" description="Uncharacterized lipoprotein Lmo0207">
    <location>
        <begin position="23"/>
        <end position="153"/>
    </location>
</feature>
<feature type="region of interest" description="Disordered" evidence="2">
    <location>
        <begin position="117"/>
        <end position="153"/>
    </location>
</feature>
<feature type="compositionally biased region" description="Polar residues" evidence="2">
    <location>
        <begin position="124"/>
        <end position="133"/>
    </location>
</feature>
<feature type="lipid moiety-binding region" description="N-palmitoyl cysteine" evidence="1">
    <location>
        <position position="23"/>
    </location>
</feature>
<feature type="lipid moiety-binding region" description="S-diacylglycerol cysteine" evidence="1">
    <location>
        <position position="23"/>
    </location>
</feature>
<gene>
    <name type="ordered locus">lmo0207</name>
</gene>
<keyword id="KW-1003">Cell membrane</keyword>
<keyword id="KW-0449">Lipoprotein</keyword>
<keyword id="KW-0472">Membrane</keyword>
<keyword id="KW-0564">Palmitate</keyword>
<keyword id="KW-1185">Reference proteome</keyword>
<keyword id="KW-0732">Signal</keyword>
<reference key="1">
    <citation type="journal article" date="1992" name="Infect. Immun.">
        <title>Nucleotide sequence of the lecithinase operon of Listeria monocytogenes and possible role of lecithinase in cell-to-cell spread.</title>
        <authorList>
            <person name="Vazquez-Boland J.-A."/>
            <person name="Kocks C."/>
            <person name="Dramsi S."/>
            <person name="Ohayon H."/>
            <person name="Geoffroy C."/>
            <person name="Mengaud J."/>
            <person name="Cossart P."/>
        </authorList>
    </citation>
    <scope>NUCLEOTIDE SEQUENCE [GENOMIC DNA]</scope>
    <source>
        <strain>LO28 / Serovar 1/2c</strain>
    </source>
</reference>
<reference key="2">
    <citation type="journal article" date="2001" name="Science">
        <title>Comparative genomics of Listeria species.</title>
        <authorList>
            <person name="Glaser P."/>
            <person name="Frangeul L."/>
            <person name="Buchrieser C."/>
            <person name="Rusniok C."/>
            <person name="Amend A."/>
            <person name="Baquero F."/>
            <person name="Berche P."/>
            <person name="Bloecker H."/>
            <person name="Brandt P."/>
            <person name="Chakraborty T."/>
            <person name="Charbit A."/>
            <person name="Chetouani F."/>
            <person name="Couve E."/>
            <person name="de Daruvar A."/>
            <person name="Dehoux P."/>
            <person name="Domann E."/>
            <person name="Dominguez-Bernal G."/>
            <person name="Duchaud E."/>
            <person name="Durant L."/>
            <person name="Dussurget O."/>
            <person name="Entian K.-D."/>
            <person name="Fsihi H."/>
            <person name="Garcia-del Portillo F."/>
            <person name="Garrido P."/>
            <person name="Gautier L."/>
            <person name="Goebel W."/>
            <person name="Gomez-Lopez N."/>
            <person name="Hain T."/>
            <person name="Hauf J."/>
            <person name="Jackson D."/>
            <person name="Jones L.-M."/>
            <person name="Kaerst U."/>
            <person name="Kreft J."/>
            <person name="Kuhn M."/>
            <person name="Kunst F."/>
            <person name="Kurapkat G."/>
            <person name="Madueno E."/>
            <person name="Maitournam A."/>
            <person name="Mata Vicente J."/>
            <person name="Ng E."/>
            <person name="Nedjari H."/>
            <person name="Nordsiek G."/>
            <person name="Novella S."/>
            <person name="de Pablos B."/>
            <person name="Perez-Diaz J.-C."/>
            <person name="Purcell R."/>
            <person name="Remmel B."/>
            <person name="Rose M."/>
            <person name="Schlueter T."/>
            <person name="Simoes N."/>
            <person name="Tierrez A."/>
            <person name="Vazquez-Boland J.-A."/>
            <person name="Voss H."/>
            <person name="Wehland J."/>
            <person name="Cossart P."/>
        </authorList>
    </citation>
    <scope>NUCLEOTIDE SEQUENCE [LARGE SCALE GENOMIC DNA]</scope>
    <source>
        <strain>ATCC BAA-679 / EGD-e</strain>
    </source>
</reference>
<protein>
    <recommendedName>
        <fullName>Uncharacterized lipoprotein Lmo0207</fullName>
    </recommendedName>
</protein>